<protein>
    <recommendedName>
        <fullName evidence="1">Probable dual-specificity RNA methyltransferase RlmN</fullName>
        <ecNumber evidence="1">2.1.1.192</ecNumber>
    </recommendedName>
    <alternativeName>
        <fullName evidence="1">23S rRNA (adenine(2503)-C(2))-methyltransferase</fullName>
    </alternativeName>
    <alternativeName>
        <fullName evidence="1">23S rRNA m2A2503 methyltransferase</fullName>
    </alternativeName>
    <alternativeName>
        <fullName evidence="1">Ribosomal RNA large subunit methyltransferase N</fullName>
    </alternativeName>
    <alternativeName>
        <fullName evidence="1">tRNA (adenine(37)-C(2))-methyltransferase</fullName>
    </alternativeName>
    <alternativeName>
        <fullName evidence="1">tRNA m2A37 methyltransferase</fullName>
    </alternativeName>
</protein>
<keyword id="KW-0004">4Fe-4S</keyword>
<keyword id="KW-0963">Cytoplasm</keyword>
<keyword id="KW-1015">Disulfide bond</keyword>
<keyword id="KW-0408">Iron</keyword>
<keyword id="KW-0411">Iron-sulfur</keyword>
<keyword id="KW-0479">Metal-binding</keyword>
<keyword id="KW-0489">Methyltransferase</keyword>
<keyword id="KW-1185">Reference proteome</keyword>
<keyword id="KW-0698">rRNA processing</keyword>
<keyword id="KW-0949">S-adenosyl-L-methionine</keyword>
<keyword id="KW-0808">Transferase</keyword>
<keyword id="KW-0819">tRNA processing</keyword>
<gene>
    <name evidence="1" type="primary">rlmN</name>
    <name type="ordered locus">stu1696</name>
</gene>
<name>RLMN_STRT2</name>
<sequence>MSEVTTQSKPERRKRQKLEDMEGYKPSIYGLTRDELIDWAVEHGEKKFRATQIWDWLYKKRVQSFEEMTNISKDFIAKLNDNFCVNPLKQRIVQESKDGTVKYLFELPDGMLIETVLMRQHYGLSVCVTTQVGCNIGCTFCASGLIKKQRDLTAGEIVAQIMLVQKYFDDRGDGERVSHVVVMGIGEPFDNYDNVLRFLRTINNDNGLAIGARHITVSTSGLAPKIKEFANEGVQVNLAVSLHAPNNDLRSSIMRINRSFPLEKLFEAIEYYIQTTNRRVTFEYIMLNEVNDHPENAQELADLTKKIRKLSYINLIPYNPVSEHDHYSRSTKERVATFYDVLKKNGVNCVVRQEHGTDIDAACGQLRSNTMKRDRQKAVAEASGKSEGK</sequence>
<reference key="1">
    <citation type="journal article" date="2004" name="Nat. Biotechnol.">
        <title>Complete sequence and comparative genome analysis of the dairy bacterium Streptococcus thermophilus.</title>
        <authorList>
            <person name="Bolotin A."/>
            <person name="Quinquis B."/>
            <person name="Renault P."/>
            <person name="Sorokin A."/>
            <person name="Ehrlich S.D."/>
            <person name="Kulakauskas S."/>
            <person name="Lapidus A."/>
            <person name="Goltsman E."/>
            <person name="Mazur M."/>
            <person name="Pusch G.D."/>
            <person name="Fonstein M."/>
            <person name="Overbeek R."/>
            <person name="Kyprides N."/>
            <person name="Purnelle B."/>
            <person name="Prozzi D."/>
            <person name="Ngui K."/>
            <person name="Masuy D."/>
            <person name="Hancy F."/>
            <person name="Burteau S."/>
            <person name="Boutry M."/>
            <person name="Delcour J."/>
            <person name="Goffeau A."/>
            <person name="Hols P."/>
        </authorList>
    </citation>
    <scope>NUCLEOTIDE SEQUENCE [LARGE SCALE GENOMIC DNA]</scope>
    <source>
        <strain>ATCC BAA-250 / LMG 18311</strain>
    </source>
</reference>
<accession>Q5M2V3</accession>
<comment type="function">
    <text evidence="1">Specifically methylates position 2 of adenine 2503 in 23S rRNA and position 2 of adenine 37 in tRNAs.</text>
</comment>
<comment type="catalytic activity">
    <reaction evidence="1">
        <text>adenosine(2503) in 23S rRNA + 2 reduced [2Fe-2S]-[ferredoxin] + 2 S-adenosyl-L-methionine = 2-methyladenosine(2503) in 23S rRNA + 5'-deoxyadenosine + L-methionine + 2 oxidized [2Fe-2S]-[ferredoxin] + S-adenosyl-L-homocysteine</text>
        <dbReference type="Rhea" id="RHEA:42916"/>
        <dbReference type="Rhea" id="RHEA-COMP:10000"/>
        <dbReference type="Rhea" id="RHEA-COMP:10001"/>
        <dbReference type="Rhea" id="RHEA-COMP:10152"/>
        <dbReference type="Rhea" id="RHEA-COMP:10282"/>
        <dbReference type="ChEBI" id="CHEBI:17319"/>
        <dbReference type="ChEBI" id="CHEBI:33737"/>
        <dbReference type="ChEBI" id="CHEBI:33738"/>
        <dbReference type="ChEBI" id="CHEBI:57844"/>
        <dbReference type="ChEBI" id="CHEBI:57856"/>
        <dbReference type="ChEBI" id="CHEBI:59789"/>
        <dbReference type="ChEBI" id="CHEBI:74411"/>
        <dbReference type="ChEBI" id="CHEBI:74497"/>
        <dbReference type="EC" id="2.1.1.192"/>
    </reaction>
</comment>
<comment type="catalytic activity">
    <reaction evidence="1">
        <text>adenosine(37) in tRNA + 2 reduced [2Fe-2S]-[ferredoxin] + 2 S-adenosyl-L-methionine = 2-methyladenosine(37) in tRNA + 5'-deoxyadenosine + L-methionine + 2 oxidized [2Fe-2S]-[ferredoxin] + S-adenosyl-L-homocysteine</text>
        <dbReference type="Rhea" id="RHEA:43332"/>
        <dbReference type="Rhea" id="RHEA-COMP:10000"/>
        <dbReference type="Rhea" id="RHEA-COMP:10001"/>
        <dbReference type="Rhea" id="RHEA-COMP:10162"/>
        <dbReference type="Rhea" id="RHEA-COMP:10485"/>
        <dbReference type="ChEBI" id="CHEBI:17319"/>
        <dbReference type="ChEBI" id="CHEBI:33737"/>
        <dbReference type="ChEBI" id="CHEBI:33738"/>
        <dbReference type="ChEBI" id="CHEBI:57844"/>
        <dbReference type="ChEBI" id="CHEBI:57856"/>
        <dbReference type="ChEBI" id="CHEBI:59789"/>
        <dbReference type="ChEBI" id="CHEBI:74411"/>
        <dbReference type="ChEBI" id="CHEBI:74497"/>
        <dbReference type="EC" id="2.1.1.192"/>
    </reaction>
</comment>
<comment type="cofactor">
    <cofactor evidence="1">
        <name>[4Fe-4S] cluster</name>
        <dbReference type="ChEBI" id="CHEBI:49883"/>
    </cofactor>
    <text evidence="1">Binds 1 [4Fe-4S] cluster. The cluster is coordinated with 3 cysteines and an exchangeable S-adenosyl-L-methionine.</text>
</comment>
<comment type="subcellular location">
    <subcellularLocation>
        <location evidence="1">Cytoplasm</location>
    </subcellularLocation>
</comment>
<comment type="miscellaneous">
    <text evidence="1">Reaction proceeds by a ping-pong mechanism involving intermediate methylation of a conserved cysteine residue.</text>
</comment>
<comment type="similarity">
    <text evidence="1">Belongs to the radical SAM superfamily. RlmN family.</text>
</comment>
<organism>
    <name type="scientific">Streptococcus thermophilus (strain ATCC BAA-250 / LMG 18311)</name>
    <dbReference type="NCBI Taxonomy" id="264199"/>
    <lineage>
        <taxon>Bacteria</taxon>
        <taxon>Bacillati</taxon>
        <taxon>Bacillota</taxon>
        <taxon>Bacilli</taxon>
        <taxon>Lactobacillales</taxon>
        <taxon>Streptococcaceae</taxon>
        <taxon>Streptococcus</taxon>
    </lineage>
</organism>
<feature type="chain" id="PRO_0000350470" description="Probable dual-specificity RNA methyltransferase RlmN">
    <location>
        <begin position="1"/>
        <end position="389"/>
    </location>
</feature>
<feature type="domain" description="Radical SAM core" evidence="2">
    <location>
        <begin position="120"/>
        <end position="358"/>
    </location>
</feature>
<feature type="region of interest" description="Disordered" evidence="3">
    <location>
        <begin position="370"/>
        <end position="389"/>
    </location>
</feature>
<feature type="compositionally biased region" description="Basic and acidic residues" evidence="3">
    <location>
        <begin position="371"/>
        <end position="389"/>
    </location>
</feature>
<feature type="active site" description="Proton acceptor" evidence="1">
    <location>
        <position position="114"/>
    </location>
</feature>
<feature type="active site" description="S-methylcysteine intermediate" evidence="1">
    <location>
        <position position="363"/>
    </location>
</feature>
<feature type="binding site" evidence="1">
    <location>
        <position position="134"/>
    </location>
    <ligand>
        <name>[4Fe-4S] cluster</name>
        <dbReference type="ChEBI" id="CHEBI:49883"/>
        <note>4Fe-4S-S-AdoMet</note>
    </ligand>
</feature>
<feature type="binding site" evidence="1">
    <location>
        <position position="138"/>
    </location>
    <ligand>
        <name>[4Fe-4S] cluster</name>
        <dbReference type="ChEBI" id="CHEBI:49883"/>
        <note>4Fe-4S-S-AdoMet</note>
    </ligand>
</feature>
<feature type="binding site" evidence="1">
    <location>
        <position position="141"/>
    </location>
    <ligand>
        <name>[4Fe-4S] cluster</name>
        <dbReference type="ChEBI" id="CHEBI:49883"/>
        <note>4Fe-4S-S-AdoMet</note>
    </ligand>
</feature>
<feature type="binding site" evidence="1">
    <location>
        <begin position="186"/>
        <end position="187"/>
    </location>
    <ligand>
        <name>S-adenosyl-L-methionine</name>
        <dbReference type="ChEBI" id="CHEBI:59789"/>
    </ligand>
</feature>
<feature type="binding site" evidence="1">
    <location>
        <position position="218"/>
    </location>
    <ligand>
        <name>S-adenosyl-L-methionine</name>
        <dbReference type="ChEBI" id="CHEBI:59789"/>
    </ligand>
</feature>
<feature type="binding site" evidence="1">
    <location>
        <begin position="241"/>
        <end position="243"/>
    </location>
    <ligand>
        <name>S-adenosyl-L-methionine</name>
        <dbReference type="ChEBI" id="CHEBI:59789"/>
    </ligand>
</feature>
<feature type="binding site" evidence="1">
    <location>
        <position position="319"/>
    </location>
    <ligand>
        <name>S-adenosyl-L-methionine</name>
        <dbReference type="ChEBI" id="CHEBI:59789"/>
    </ligand>
</feature>
<feature type="disulfide bond" description="(transient)" evidence="1">
    <location>
        <begin position="127"/>
        <end position="363"/>
    </location>
</feature>
<evidence type="ECO:0000255" key="1">
    <source>
        <dbReference type="HAMAP-Rule" id="MF_01849"/>
    </source>
</evidence>
<evidence type="ECO:0000255" key="2">
    <source>
        <dbReference type="PROSITE-ProRule" id="PRU01266"/>
    </source>
</evidence>
<evidence type="ECO:0000256" key="3">
    <source>
        <dbReference type="SAM" id="MobiDB-lite"/>
    </source>
</evidence>
<proteinExistence type="inferred from homology"/>
<dbReference type="EC" id="2.1.1.192" evidence="1"/>
<dbReference type="EMBL" id="CP000023">
    <property type="protein sequence ID" value="AAV61297.1"/>
    <property type="molecule type" value="Genomic_DNA"/>
</dbReference>
<dbReference type="RefSeq" id="WP_011226504.1">
    <property type="nucleotide sequence ID" value="NC_006448.1"/>
</dbReference>
<dbReference type="SMR" id="Q5M2V3"/>
<dbReference type="STRING" id="264199.stu1696"/>
<dbReference type="GeneID" id="66899434"/>
<dbReference type="KEGG" id="stl:stu1696"/>
<dbReference type="eggNOG" id="COG0820">
    <property type="taxonomic scope" value="Bacteria"/>
</dbReference>
<dbReference type="HOGENOM" id="CLU_029101_0_1_9"/>
<dbReference type="Proteomes" id="UP000001170">
    <property type="component" value="Chromosome"/>
</dbReference>
<dbReference type="GO" id="GO:0005737">
    <property type="term" value="C:cytoplasm"/>
    <property type="evidence" value="ECO:0007669"/>
    <property type="project" value="UniProtKB-SubCell"/>
</dbReference>
<dbReference type="GO" id="GO:0051539">
    <property type="term" value="F:4 iron, 4 sulfur cluster binding"/>
    <property type="evidence" value="ECO:0007669"/>
    <property type="project" value="UniProtKB-UniRule"/>
</dbReference>
<dbReference type="GO" id="GO:0046872">
    <property type="term" value="F:metal ion binding"/>
    <property type="evidence" value="ECO:0007669"/>
    <property type="project" value="UniProtKB-KW"/>
</dbReference>
<dbReference type="GO" id="GO:0070040">
    <property type="term" value="F:rRNA (adenine(2503)-C2-)-methyltransferase activity"/>
    <property type="evidence" value="ECO:0007669"/>
    <property type="project" value="UniProtKB-UniRule"/>
</dbReference>
<dbReference type="GO" id="GO:0019843">
    <property type="term" value="F:rRNA binding"/>
    <property type="evidence" value="ECO:0007669"/>
    <property type="project" value="UniProtKB-UniRule"/>
</dbReference>
<dbReference type="GO" id="GO:0002935">
    <property type="term" value="F:tRNA (adenine(37)-C2)-methyltransferase activity"/>
    <property type="evidence" value="ECO:0007669"/>
    <property type="project" value="UniProtKB-UniRule"/>
</dbReference>
<dbReference type="GO" id="GO:0000049">
    <property type="term" value="F:tRNA binding"/>
    <property type="evidence" value="ECO:0007669"/>
    <property type="project" value="UniProtKB-UniRule"/>
</dbReference>
<dbReference type="GO" id="GO:0070475">
    <property type="term" value="P:rRNA base methylation"/>
    <property type="evidence" value="ECO:0007669"/>
    <property type="project" value="UniProtKB-UniRule"/>
</dbReference>
<dbReference type="GO" id="GO:0030488">
    <property type="term" value="P:tRNA methylation"/>
    <property type="evidence" value="ECO:0007669"/>
    <property type="project" value="UniProtKB-UniRule"/>
</dbReference>
<dbReference type="CDD" id="cd01335">
    <property type="entry name" value="Radical_SAM"/>
    <property type="match status" value="1"/>
</dbReference>
<dbReference type="FunFam" id="3.20.20.70:FF:000014">
    <property type="entry name" value="Probable dual-specificity RNA methyltransferase RlmN"/>
    <property type="match status" value="1"/>
</dbReference>
<dbReference type="Gene3D" id="1.10.150.530">
    <property type="match status" value="1"/>
</dbReference>
<dbReference type="Gene3D" id="3.20.20.70">
    <property type="entry name" value="Aldolase class I"/>
    <property type="match status" value="1"/>
</dbReference>
<dbReference type="HAMAP" id="MF_01849">
    <property type="entry name" value="RNA_methyltr_RlmN"/>
    <property type="match status" value="1"/>
</dbReference>
<dbReference type="InterPro" id="IPR013785">
    <property type="entry name" value="Aldolase_TIM"/>
</dbReference>
<dbReference type="InterPro" id="IPR040072">
    <property type="entry name" value="Methyltransferase_A"/>
</dbReference>
<dbReference type="InterPro" id="IPR048641">
    <property type="entry name" value="RlmN_N"/>
</dbReference>
<dbReference type="InterPro" id="IPR027492">
    <property type="entry name" value="RNA_MTrfase_RlmN"/>
</dbReference>
<dbReference type="InterPro" id="IPR004383">
    <property type="entry name" value="rRNA_lsu_MTrfase_RlmN/Cfr"/>
</dbReference>
<dbReference type="InterPro" id="IPR007197">
    <property type="entry name" value="rSAM"/>
</dbReference>
<dbReference type="NCBIfam" id="TIGR00048">
    <property type="entry name" value="rRNA_mod_RlmN"/>
    <property type="match status" value="1"/>
</dbReference>
<dbReference type="PANTHER" id="PTHR30544">
    <property type="entry name" value="23S RRNA METHYLTRANSFERASE"/>
    <property type="match status" value="1"/>
</dbReference>
<dbReference type="PANTHER" id="PTHR30544:SF5">
    <property type="entry name" value="RADICAL SAM CORE DOMAIN-CONTAINING PROTEIN"/>
    <property type="match status" value="1"/>
</dbReference>
<dbReference type="Pfam" id="PF04055">
    <property type="entry name" value="Radical_SAM"/>
    <property type="match status" value="1"/>
</dbReference>
<dbReference type="Pfam" id="PF21016">
    <property type="entry name" value="RlmN_N"/>
    <property type="match status" value="1"/>
</dbReference>
<dbReference type="PIRSF" id="PIRSF006004">
    <property type="entry name" value="CHP00048"/>
    <property type="match status" value="1"/>
</dbReference>
<dbReference type="SFLD" id="SFLDF00275">
    <property type="entry name" value="adenosine_C2_methyltransferase"/>
    <property type="match status" value="1"/>
</dbReference>
<dbReference type="SFLD" id="SFLDG01062">
    <property type="entry name" value="methyltransferase_(Class_A)"/>
    <property type="match status" value="1"/>
</dbReference>
<dbReference type="SUPFAM" id="SSF102114">
    <property type="entry name" value="Radical SAM enzymes"/>
    <property type="match status" value="1"/>
</dbReference>
<dbReference type="PROSITE" id="PS51918">
    <property type="entry name" value="RADICAL_SAM"/>
    <property type="match status" value="1"/>
</dbReference>